<gene>
    <name evidence="1" type="primary">ttcA</name>
    <name type="ordered locus">Mfla_0228</name>
</gene>
<evidence type="ECO:0000255" key="1">
    <source>
        <dbReference type="HAMAP-Rule" id="MF_01850"/>
    </source>
</evidence>
<proteinExistence type="inferred from homology"/>
<dbReference type="EC" id="2.8.1.-" evidence="1"/>
<dbReference type="EMBL" id="CP000284">
    <property type="protein sequence ID" value="ABE48499.1"/>
    <property type="molecule type" value="Genomic_DNA"/>
</dbReference>
<dbReference type="RefSeq" id="WP_011478596.1">
    <property type="nucleotide sequence ID" value="NC_007947.1"/>
</dbReference>
<dbReference type="SMR" id="Q1H4T8"/>
<dbReference type="STRING" id="265072.Mfla_0228"/>
<dbReference type="KEGG" id="mfa:Mfla_0228"/>
<dbReference type="eggNOG" id="COG0037">
    <property type="taxonomic scope" value="Bacteria"/>
</dbReference>
<dbReference type="HOGENOM" id="CLU_026481_0_0_4"/>
<dbReference type="OrthoDB" id="9801054at2"/>
<dbReference type="Proteomes" id="UP000002440">
    <property type="component" value="Chromosome"/>
</dbReference>
<dbReference type="GO" id="GO:0005737">
    <property type="term" value="C:cytoplasm"/>
    <property type="evidence" value="ECO:0007669"/>
    <property type="project" value="UniProtKB-SubCell"/>
</dbReference>
<dbReference type="GO" id="GO:0051539">
    <property type="term" value="F:4 iron, 4 sulfur cluster binding"/>
    <property type="evidence" value="ECO:0007669"/>
    <property type="project" value="UniProtKB-UniRule"/>
</dbReference>
<dbReference type="GO" id="GO:0005524">
    <property type="term" value="F:ATP binding"/>
    <property type="evidence" value="ECO:0007669"/>
    <property type="project" value="UniProtKB-UniRule"/>
</dbReference>
<dbReference type="GO" id="GO:0000287">
    <property type="term" value="F:magnesium ion binding"/>
    <property type="evidence" value="ECO:0007669"/>
    <property type="project" value="UniProtKB-UniRule"/>
</dbReference>
<dbReference type="GO" id="GO:0016783">
    <property type="term" value="F:sulfurtransferase activity"/>
    <property type="evidence" value="ECO:0007669"/>
    <property type="project" value="UniProtKB-UniRule"/>
</dbReference>
<dbReference type="GO" id="GO:0000049">
    <property type="term" value="F:tRNA binding"/>
    <property type="evidence" value="ECO:0007669"/>
    <property type="project" value="UniProtKB-KW"/>
</dbReference>
<dbReference type="GO" id="GO:0034227">
    <property type="term" value="P:tRNA thio-modification"/>
    <property type="evidence" value="ECO:0007669"/>
    <property type="project" value="UniProtKB-UniRule"/>
</dbReference>
<dbReference type="CDD" id="cd24138">
    <property type="entry name" value="TtcA-like"/>
    <property type="match status" value="1"/>
</dbReference>
<dbReference type="Gene3D" id="3.40.50.620">
    <property type="entry name" value="HUPs"/>
    <property type="match status" value="1"/>
</dbReference>
<dbReference type="HAMAP" id="MF_01850">
    <property type="entry name" value="TtcA"/>
    <property type="match status" value="1"/>
</dbReference>
<dbReference type="InterPro" id="IPR014729">
    <property type="entry name" value="Rossmann-like_a/b/a_fold"/>
</dbReference>
<dbReference type="InterPro" id="IPR011063">
    <property type="entry name" value="TilS/TtcA_N"/>
</dbReference>
<dbReference type="InterPro" id="IPR012089">
    <property type="entry name" value="tRNA_Cyd_32_2_STrfase"/>
</dbReference>
<dbReference type="InterPro" id="IPR035107">
    <property type="entry name" value="tRNA_thiolation_TtcA_Ctu1"/>
</dbReference>
<dbReference type="NCBIfam" id="NF007972">
    <property type="entry name" value="PRK10696.1"/>
    <property type="match status" value="1"/>
</dbReference>
<dbReference type="PANTHER" id="PTHR43686:SF1">
    <property type="entry name" value="AMINOTRAN_5 DOMAIN-CONTAINING PROTEIN"/>
    <property type="match status" value="1"/>
</dbReference>
<dbReference type="PANTHER" id="PTHR43686">
    <property type="entry name" value="SULFURTRANSFERASE-RELATED"/>
    <property type="match status" value="1"/>
</dbReference>
<dbReference type="Pfam" id="PF01171">
    <property type="entry name" value="ATP_bind_3"/>
    <property type="match status" value="1"/>
</dbReference>
<dbReference type="PIRSF" id="PIRSF004976">
    <property type="entry name" value="ATPase_YdaO"/>
    <property type="match status" value="1"/>
</dbReference>
<dbReference type="SUPFAM" id="SSF52402">
    <property type="entry name" value="Adenine nucleotide alpha hydrolases-like"/>
    <property type="match status" value="1"/>
</dbReference>
<sequence length="303" mass="34106">MIKHYPDNASNSFLKLRNSLISATGKAIGDYNMIEDGDTILVCMSGGKDSYTMLMMLLALQERAPVNFKLIAMNLDQKQPGFPAHILPAYLEQLGVDHRIVEADTYSIVKEKIPEGKTTCSLCSRLRRGIIYRTAQELGANKIALGHHRDDIVETLFLNMFFGAKMKAMPPKLATNKGEFHVIRPLAYCAEKDIASYARGMDFPIIPCDLCGSQENLQRQKVKDMLQAWEREQPGRVNNIFRAICNVEPSHLADTDLYDFKHMSQSKAEDEDPLFGDIDKESNPALSLVSSEGFRIEFKRNIA</sequence>
<name>TTCA_METFK</name>
<feature type="chain" id="PRO_0000348768" description="tRNA-cytidine(32) 2-sulfurtransferase">
    <location>
        <begin position="1"/>
        <end position="303"/>
    </location>
</feature>
<feature type="short sequence motif" description="PP-loop motif" evidence="1">
    <location>
        <begin position="45"/>
        <end position="50"/>
    </location>
</feature>
<feature type="binding site" evidence="1">
    <location>
        <position position="120"/>
    </location>
    <ligand>
        <name>[4Fe-4S] cluster</name>
        <dbReference type="ChEBI" id="CHEBI:49883"/>
    </ligand>
</feature>
<feature type="binding site" evidence="1">
    <location>
        <position position="123"/>
    </location>
    <ligand>
        <name>[4Fe-4S] cluster</name>
        <dbReference type="ChEBI" id="CHEBI:49883"/>
    </ligand>
</feature>
<feature type="binding site" evidence="1">
    <location>
        <position position="211"/>
    </location>
    <ligand>
        <name>[4Fe-4S] cluster</name>
        <dbReference type="ChEBI" id="CHEBI:49883"/>
    </ligand>
</feature>
<keyword id="KW-0004">4Fe-4S</keyword>
<keyword id="KW-0067">ATP-binding</keyword>
<keyword id="KW-0963">Cytoplasm</keyword>
<keyword id="KW-0408">Iron</keyword>
<keyword id="KW-0411">Iron-sulfur</keyword>
<keyword id="KW-0460">Magnesium</keyword>
<keyword id="KW-0479">Metal-binding</keyword>
<keyword id="KW-0547">Nucleotide-binding</keyword>
<keyword id="KW-1185">Reference proteome</keyword>
<keyword id="KW-0694">RNA-binding</keyword>
<keyword id="KW-0808">Transferase</keyword>
<keyword id="KW-0819">tRNA processing</keyword>
<keyword id="KW-0820">tRNA-binding</keyword>
<accession>Q1H4T8</accession>
<protein>
    <recommendedName>
        <fullName evidence="1">tRNA-cytidine(32) 2-sulfurtransferase</fullName>
        <ecNumber evidence="1">2.8.1.-</ecNumber>
    </recommendedName>
    <alternativeName>
        <fullName evidence="1">Two-thiocytidine biosynthesis protein A</fullName>
    </alternativeName>
    <alternativeName>
        <fullName evidence="1">tRNA 2-thiocytidine biosynthesis protein TtcA</fullName>
    </alternativeName>
</protein>
<organism>
    <name type="scientific">Methylobacillus flagellatus (strain ATCC 51484 / DSM 6875 / VKM B-1610 / KT)</name>
    <dbReference type="NCBI Taxonomy" id="265072"/>
    <lineage>
        <taxon>Bacteria</taxon>
        <taxon>Pseudomonadati</taxon>
        <taxon>Pseudomonadota</taxon>
        <taxon>Betaproteobacteria</taxon>
        <taxon>Nitrosomonadales</taxon>
        <taxon>Methylophilaceae</taxon>
        <taxon>Methylobacillus</taxon>
    </lineage>
</organism>
<reference key="1">
    <citation type="submission" date="2006-03" db="EMBL/GenBank/DDBJ databases">
        <title>Complete sequence of Methylobacillus flagellatus KT.</title>
        <authorList>
            <consortium name="US DOE Joint Genome Institute"/>
            <person name="Copeland A."/>
            <person name="Lucas S."/>
            <person name="Lapidus A."/>
            <person name="Barry K."/>
            <person name="Detter J.C."/>
            <person name="Glavina del Rio T."/>
            <person name="Hammon N."/>
            <person name="Israni S."/>
            <person name="Dalin E."/>
            <person name="Tice H."/>
            <person name="Pitluck S."/>
            <person name="Brettin T."/>
            <person name="Bruce D."/>
            <person name="Han C."/>
            <person name="Tapia R."/>
            <person name="Saunders E."/>
            <person name="Gilna P."/>
            <person name="Schmutz J."/>
            <person name="Larimer F."/>
            <person name="Land M."/>
            <person name="Kyrpides N."/>
            <person name="Anderson I."/>
            <person name="Richardson P."/>
        </authorList>
    </citation>
    <scope>NUCLEOTIDE SEQUENCE [LARGE SCALE GENOMIC DNA]</scope>
    <source>
        <strain>ATCC 51484 / DSM 6875 / VKM B-1610 / KT</strain>
    </source>
</reference>
<comment type="function">
    <text evidence="1">Catalyzes the ATP-dependent 2-thiolation of cytidine in position 32 of tRNA, to form 2-thiocytidine (s(2)C32). The sulfur atoms are provided by the cysteine/cysteine desulfurase (IscS) system.</text>
</comment>
<comment type="catalytic activity">
    <reaction evidence="1">
        <text>cytidine(32) in tRNA + S-sulfanyl-L-cysteinyl-[cysteine desulfurase] + AH2 + ATP = 2-thiocytidine(32) in tRNA + L-cysteinyl-[cysteine desulfurase] + A + AMP + diphosphate + H(+)</text>
        <dbReference type="Rhea" id="RHEA:57048"/>
        <dbReference type="Rhea" id="RHEA-COMP:10288"/>
        <dbReference type="Rhea" id="RHEA-COMP:12157"/>
        <dbReference type="Rhea" id="RHEA-COMP:12158"/>
        <dbReference type="Rhea" id="RHEA-COMP:14821"/>
        <dbReference type="ChEBI" id="CHEBI:13193"/>
        <dbReference type="ChEBI" id="CHEBI:15378"/>
        <dbReference type="ChEBI" id="CHEBI:17499"/>
        <dbReference type="ChEBI" id="CHEBI:29950"/>
        <dbReference type="ChEBI" id="CHEBI:30616"/>
        <dbReference type="ChEBI" id="CHEBI:33019"/>
        <dbReference type="ChEBI" id="CHEBI:61963"/>
        <dbReference type="ChEBI" id="CHEBI:82748"/>
        <dbReference type="ChEBI" id="CHEBI:141453"/>
        <dbReference type="ChEBI" id="CHEBI:456215"/>
    </reaction>
    <physiologicalReaction direction="left-to-right" evidence="1">
        <dbReference type="Rhea" id="RHEA:57049"/>
    </physiologicalReaction>
</comment>
<comment type="cofactor">
    <cofactor evidence="1">
        <name>Mg(2+)</name>
        <dbReference type="ChEBI" id="CHEBI:18420"/>
    </cofactor>
</comment>
<comment type="cofactor">
    <cofactor evidence="1">
        <name>[4Fe-4S] cluster</name>
        <dbReference type="ChEBI" id="CHEBI:49883"/>
    </cofactor>
    <text evidence="1">Binds 1 [4Fe-4S] cluster per subunit. The cluster is chelated by three Cys residues, the fourth Fe has a free coordination site that may bind a sulfur atom transferred from the persulfide of IscS.</text>
</comment>
<comment type="pathway">
    <text evidence="1">tRNA modification.</text>
</comment>
<comment type="subunit">
    <text evidence="1">Homodimer.</text>
</comment>
<comment type="subcellular location">
    <subcellularLocation>
        <location evidence="1">Cytoplasm</location>
    </subcellularLocation>
</comment>
<comment type="miscellaneous">
    <text evidence="1">The thiolation reaction likely consists of two steps: a first activation step by ATP to form an adenylated intermediate of the target base of tRNA, and a second nucleophilic substitution step of the sulfur (S) atom supplied by the hydrosulfide attached to the Fe-S cluster.</text>
</comment>
<comment type="similarity">
    <text evidence="1">Belongs to the TtcA family.</text>
</comment>